<organism>
    <name type="scientific">Influenza A virus (strain A/Hong Kong/212/2003 H5N1 genotype Z+)</name>
    <dbReference type="NCBI Taxonomy" id="279794"/>
    <lineage>
        <taxon>Viruses</taxon>
        <taxon>Riboviria</taxon>
        <taxon>Orthornavirae</taxon>
        <taxon>Negarnaviricota</taxon>
        <taxon>Polyploviricotina</taxon>
        <taxon>Insthoviricetes</taxon>
        <taxon>Articulavirales</taxon>
        <taxon>Orthomyxoviridae</taxon>
        <taxon>Alphainfluenzavirus</taxon>
        <taxon>Alphainfluenzavirus influenzae</taxon>
        <taxon>Influenza A virus</taxon>
    </lineage>
</organism>
<keyword id="KW-0167">Capsid protein</keyword>
<keyword id="KW-1139">Helical capsid protein</keyword>
<keyword id="KW-1048">Host nucleus</keyword>
<keyword id="KW-0945">Host-virus interaction</keyword>
<keyword id="KW-0687">Ribonucleoprotein</keyword>
<keyword id="KW-0694">RNA-binding</keyword>
<keyword id="KW-0543">Viral nucleoprotein</keyword>
<keyword id="KW-1163">Viral penetration into host nucleus</keyword>
<keyword id="KW-0946">Virion</keyword>
<keyword id="KW-1160">Virus entry into host cell</keyword>
<sequence>MASQGTKRSYEQMETGGERQNATEIRASVGRMVSGIGRFYIQMCTELKLSDYEGRLIQNSITIERMVLSAFDERRNRYLEEHPSAGKDPKKTGGPIYRRRDGKWVRELILYDKEEIRRIWRQANNGEDATAGLTHLMIWHSNLNDATYQRTRALVRTGMDPRMCSLMQGSTLPRRSGAAGAAVKGVGTMVMELIRMIKRGINDRNFWRGENGRRTRIAYERMCNILKGKFQTAAQRAMMDQVRESRNPGNAEIEDLIFLARSALILRGSVAHKSCLPACVYGLAVASGYDFEREGYSLVGIDPFRLLQNSQVFSLIRPNENPAHKSQLVWMACHSAAFEDLRVSSFIRGTRVVPRGQLSTRGVQIASNENMEAMDSNTLELRSRYWAIRTRSGGNTNQQRASAGQISVQPTFSVQRNLPFERSTIMAAFTGNTEGRTSDMRTEIIRMMESARPEDVSFQGRGVFELSDEKATNPIVPSFDMNNEGSYFFGDNAEEYDN</sequence>
<evidence type="ECO:0000255" key="1">
    <source>
        <dbReference type="HAMAP-Rule" id="MF_04070"/>
    </source>
</evidence>
<evidence type="ECO:0000256" key="2">
    <source>
        <dbReference type="SAM" id="MobiDB-lite"/>
    </source>
</evidence>
<protein>
    <recommendedName>
        <fullName evidence="1">Nucleoprotein</fullName>
    </recommendedName>
    <alternativeName>
        <fullName evidence="1">Nucleocapsid protein</fullName>
        <shortName evidence="1">Protein N</shortName>
    </alternativeName>
</protein>
<name>NCAP_I03A0</name>
<comment type="function">
    <text evidence="1">Encapsidates the negative strand viral RNA, protecting it from nucleases. The encapsidated genomic RNA is termed the ribonucleoprotein (RNP) and serves as template for transcription and replication. The RNP needs to be localized in the host nucleus to start an infectious cycle, but is too large to diffuse through the nuclear pore complex. NP comprises at least 2 nuclear localization signals that are responsible for the active RNP import into the nucleus through cellular importin alpha/beta pathway. Later in the infection, nclear export of RNPs are mediated through viral proteins NEP interacting with M1 which binds nucleoproteins. It is possible that nucleoprotein binds directly host exportin-1/XPO1 and plays an active role in RNPs nuclear export. M1 interaction with RNP seems to hide nucleoprotein's nuclear localization signals. Soon after a virion infects a new cell, M1 dissociates from the RNP under acidification of the virion driven by M2 protein. Dissociation of M1 from RNP unmasks nucleoprotein's nuclear localization signals, targeting the RNP to the nucleus.</text>
</comment>
<comment type="subunit">
    <text evidence="1">Homomultimerizes to form the nucleocapsid. May bind host exportin-1/XPO1. Binds to viral genomic RNA. Protein-RNA contacts are mediated by a combination of electrostatic interactions between positively charged residues and the phosphate backbone and planar interactions between aromatic side chains and bases.</text>
</comment>
<comment type="subcellular location">
    <subcellularLocation>
        <location evidence="1">Virion</location>
    </subcellularLocation>
    <subcellularLocation>
        <location evidence="1">Host nucleus</location>
    </subcellularLocation>
</comment>
<comment type="PTM">
    <text evidence="1">Late in virus-infected cells, may be cleaved from a 56-kDa protein to a 53-kDa protein by a cellular caspase. This cleavage might be a marker for the onset of apoptosis in infected cells or have a specific function in virus host interaction.</text>
</comment>
<comment type="similarity">
    <text evidence="1">Belongs to the influenza viruses nucleoprotein family.</text>
</comment>
<gene>
    <name evidence="1" type="primary">NP</name>
</gene>
<organismHost>
    <name type="scientific">Aves</name>
    <dbReference type="NCBI Taxonomy" id="8782"/>
</organismHost>
<organismHost>
    <name type="scientific">Felis catus</name>
    <name type="common">Cat</name>
    <name type="synonym">Felis silvestris catus</name>
    <dbReference type="NCBI Taxonomy" id="9685"/>
</organismHost>
<organismHost>
    <name type="scientific">Homo sapiens</name>
    <name type="common">Human</name>
    <dbReference type="NCBI Taxonomy" id="9606"/>
</organismHost>
<organismHost>
    <name type="scientific">Panthera pardus</name>
    <name type="common">Leopard</name>
    <name type="synonym">Felis pardus</name>
    <dbReference type="NCBI Taxonomy" id="9691"/>
</organismHost>
<organismHost>
    <name type="scientific">Panthera tigris</name>
    <name type="common">Tiger</name>
    <dbReference type="NCBI Taxonomy" id="9694"/>
</organismHost>
<organismHost>
    <name type="scientific">Sus scrofa</name>
    <name type="common">Pig</name>
    <dbReference type="NCBI Taxonomy" id="9823"/>
</organismHost>
<proteinExistence type="inferred from homology"/>
<reference key="1">
    <citation type="journal article" date="2004" name="Proc. Natl. Acad. Sci. U.S.A.">
        <title>H5N1 influenza: a protean pandemic threat.</title>
        <authorList>
            <person name="Guan Y."/>
            <person name="Poon L.L.M."/>
            <person name="Cheung C.Y."/>
            <person name="Ellis T.M."/>
            <person name="Lim W."/>
            <person name="Lipatov A.S."/>
            <person name="Chan K.H."/>
            <person name="Sturm-Ramirez K.M."/>
            <person name="Cheung C.L."/>
            <person name="Leung Y.H.C."/>
            <person name="Yuen K.Y."/>
            <person name="Webster R.G."/>
            <person name="Peiris J.S.M."/>
        </authorList>
    </citation>
    <scope>NUCLEOTIDE SEQUENCE [GENOMIC RNA]</scope>
</reference>
<feature type="chain" id="PRO_0000310926" description="Nucleoprotein">
    <location>
        <begin position="1"/>
        <end position="498"/>
    </location>
</feature>
<feature type="region of interest" description="Disordered" evidence="2">
    <location>
        <begin position="1"/>
        <end position="21"/>
    </location>
</feature>
<feature type="short sequence motif" description="Unconventional nuclear localization signal" evidence="1">
    <location>
        <begin position="1"/>
        <end position="18"/>
    </location>
</feature>
<feature type="short sequence motif" description="Bipartite nuclear localization signal" evidence="1">
    <location>
        <begin position="198"/>
        <end position="216"/>
    </location>
</feature>
<dbReference type="EMBL" id="AY575905">
    <property type="protein sequence ID" value="AAT39101.1"/>
    <property type="molecule type" value="Genomic_DNA"/>
</dbReference>
<dbReference type="SMR" id="Q6J8C0"/>
<dbReference type="GO" id="GO:0019029">
    <property type="term" value="C:helical viral capsid"/>
    <property type="evidence" value="ECO:0007669"/>
    <property type="project" value="UniProtKB-UniRule"/>
</dbReference>
<dbReference type="GO" id="GO:0043657">
    <property type="term" value="C:host cell"/>
    <property type="evidence" value="ECO:0007669"/>
    <property type="project" value="GOC"/>
</dbReference>
<dbReference type="GO" id="GO:0042025">
    <property type="term" value="C:host cell nucleus"/>
    <property type="evidence" value="ECO:0007669"/>
    <property type="project" value="UniProtKB-SubCell"/>
</dbReference>
<dbReference type="GO" id="GO:1990904">
    <property type="term" value="C:ribonucleoprotein complex"/>
    <property type="evidence" value="ECO:0007669"/>
    <property type="project" value="UniProtKB-KW"/>
</dbReference>
<dbReference type="GO" id="GO:0019013">
    <property type="term" value="C:viral nucleocapsid"/>
    <property type="evidence" value="ECO:0007669"/>
    <property type="project" value="UniProtKB-UniRule"/>
</dbReference>
<dbReference type="GO" id="GO:0003723">
    <property type="term" value="F:RNA binding"/>
    <property type="evidence" value="ECO:0007669"/>
    <property type="project" value="UniProtKB-UniRule"/>
</dbReference>
<dbReference type="GO" id="GO:0005198">
    <property type="term" value="F:structural molecule activity"/>
    <property type="evidence" value="ECO:0007669"/>
    <property type="project" value="UniProtKB-UniRule"/>
</dbReference>
<dbReference type="GO" id="GO:0046718">
    <property type="term" value="P:symbiont entry into host cell"/>
    <property type="evidence" value="ECO:0007669"/>
    <property type="project" value="UniProtKB-KW"/>
</dbReference>
<dbReference type="GO" id="GO:0075732">
    <property type="term" value="P:viral penetration into host nucleus"/>
    <property type="evidence" value="ECO:0007669"/>
    <property type="project" value="UniProtKB-UniRule"/>
</dbReference>
<dbReference type="HAMAP" id="MF_04070">
    <property type="entry name" value="INFV_NCAP"/>
    <property type="match status" value="1"/>
</dbReference>
<dbReference type="InterPro" id="IPR002141">
    <property type="entry name" value="Flu_NP"/>
</dbReference>
<dbReference type="Pfam" id="PF00506">
    <property type="entry name" value="Flu_NP"/>
    <property type="match status" value="1"/>
</dbReference>
<dbReference type="SUPFAM" id="SSF161003">
    <property type="entry name" value="flu NP-like"/>
    <property type="match status" value="1"/>
</dbReference>
<accession>Q6J8C0</accession>